<proteinExistence type="evidence at transcript level"/>
<accession>P82266</accession>
<dbReference type="EMBL" id="AC006921">
    <property type="protein sequence ID" value="AAD21445.1"/>
    <property type="status" value="ALT_SEQ"/>
    <property type="molecule type" value="Genomic_DNA"/>
</dbReference>
<dbReference type="EMBL" id="CP002685">
    <property type="protein sequence ID" value="AEC09215.1"/>
    <property type="molecule type" value="Genomic_DNA"/>
</dbReference>
<dbReference type="EMBL" id="BX819626">
    <property type="status" value="NOT_ANNOTATED_CDS"/>
    <property type="molecule type" value="mRNA"/>
</dbReference>
<dbReference type="PIR" id="H84777">
    <property type="entry name" value="H84777"/>
</dbReference>
<dbReference type="RefSeq" id="NP_181162.2">
    <molecule id="P82266-1"/>
    <property type="nucleotide sequence ID" value="NM_129178.3"/>
</dbReference>
<dbReference type="SMR" id="P82266"/>
<dbReference type="FunCoup" id="P82266">
    <property type="interactions" value="2224"/>
</dbReference>
<dbReference type="STRING" id="3702.P82266"/>
<dbReference type="iPTMnet" id="P82266"/>
<dbReference type="PaxDb" id="3702-AT2G36200.2"/>
<dbReference type="ProteomicsDB" id="238401">
    <molecule id="P82266-1"/>
</dbReference>
<dbReference type="EnsemblPlants" id="AT2G36200.1">
    <molecule id="P82266-1"/>
    <property type="protein sequence ID" value="AT2G36200.1"/>
    <property type="gene ID" value="AT2G36200"/>
</dbReference>
<dbReference type="GeneID" id="818192"/>
<dbReference type="Gramene" id="AT2G36200.1">
    <molecule id="P82266-1"/>
    <property type="protein sequence ID" value="AT2G36200.1"/>
    <property type="gene ID" value="AT2G36200"/>
</dbReference>
<dbReference type="KEGG" id="ath:AT2G36200"/>
<dbReference type="Araport" id="AT2G36200"/>
<dbReference type="TAIR" id="AT2G36200"/>
<dbReference type="eggNOG" id="KOG0243">
    <property type="taxonomic scope" value="Eukaryota"/>
</dbReference>
<dbReference type="InParanoid" id="P82266"/>
<dbReference type="OMA" id="QEWSAIE"/>
<dbReference type="OrthoDB" id="3176171at2759"/>
<dbReference type="PhylomeDB" id="P82266"/>
<dbReference type="PRO" id="PR:P82266"/>
<dbReference type="Proteomes" id="UP000006548">
    <property type="component" value="Chromosome 2"/>
</dbReference>
<dbReference type="ExpressionAtlas" id="P82266">
    <property type="expression patterns" value="baseline and differential"/>
</dbReference>
<dbReference type="GO" id="GO:0005737">
    <property type="term" value="C:cytoplasm"/>
    <property type="evidence" value="ECO:0007669"/>
    <property type="project" value="UniProtKB-KW"/>
</dbReference>
<dbReference type="GO" id="GO:0005874">
    <property type="term" value="C:microtubule"/>
    <property type="evidence" value="ECO:0007669"/>
    <property type="project" value="UniProtKB-KW"/>
</dbReference>
<dbReference type="GO" id="GO:0005819">
    <property type="term" value="C:spindle"/>
    <property type="evidence" value="ECO:0007669"/>
    <property type="project" value="UniProtKB-SubCell"/>
</dbReference>
<dbReference type="GO" id="GO:0005524">
    <property type="term" value="F:ATP binding"/>
    <property type="evidence" value="ECO:0007669"/>
    <property type="project" value="UniProtKB-KW"/>
</dbReference>
<dbReference type="GO" id="GO:0008017">
    <property type="term" value="F:microtubule binding"/>
    <property type="evidence" value="ECO:0007669"/>
    <property type="project" value="InterPro"/>
</dbReference>
<dbReference type="GO" id="GO:0003777">
    <property type="term" value="F:microtubule motor activity"/>
    <property type="evidence" value="ECO:0007669"/>
    <property type="project" value="InterPro"/>
</dbReference>
<dbReference type="GO" id="GO:0007018">
    <property type="term" value="P:microtubule-based movement"/>
    <property type="evidence" value="ECO:0007669"/>
    <property type="project" value="InterPro"/>
</dbReference>
<dbReference type="GO" id="GO:0007051">
    <property type="term" value="P:spindle organization"/>
    <property type="evidence" value="ECO:0007669"/>
    <property type="project" value="UniProtKB-ARBA"/>
</dbReference>
<dbReference type="CDD" id="cd01364">
    <property type="entry name" value="KISc_BimC_Eg5"/>
    <property type="match status" value="1"/>
</dbReference>
<dbReference type="FunFam" id="3.40.850.10:FF:000019">
    <property type="entry name" value="Kinesin-like protein KIN-5D"/>
    <property type="match status" value="1"/>
</dbReference>
<dbReference type="Gene3D" id="3.40.850.10">
    <property type="entry name" value="Kinesin motor domain"/>
    <property type="match status" value="1"/>
</dbReference>
<dbReference type="InterPro" id="IPR047149">
    <property type="entry name" value="KIF11-like"/>
</dbReference>
<dbReference type="InterPro" id="IPR047241">
    <property type="entry name" value="KIF11-like_kin_motor_dom"/>
</dbReference>
<dbReference type="InterPro" id="IPR019821">
    <property type="entry name" value="Kinesin_motor_CS"/>
</dbReference>
<dbReference type="InterPro" id="IPR001752">
    <property type="entry name" value="Kinesin_motor_dom"/>
</dbReference>
<dbReference type="InterPro" id="IPR036961">
    <property type="entry name" value="Kinesin_motor_dom_sf"/>
</dbReference>
<dbReference type="InterPro" id="IPR027417">
    <property type="entry name" value="P-loop_NTPase"/>
</dbReference>
<dbReference type="PANTHER" id="PTHR47970:SF12">
    <property type="entry name" value="KINESIN FAMILY MEMBER 11"/>
    <property type="match status" value="1"/>
</dbReference>
<dbReference type="PANTHER" id="PTHR47970">
    <property type="entry name" value="KINESIN-LIKE PROTEIN KIF11"/>
    <property type="match status" value="1"/>
</dbReference>
<dbReference type="Pfam" id="PF00225">
    <property type="entry name" value="Kinesin"/>
    <property type="match status" value="1"/>
</dbReference>
<dbReference type="PRINTS" id="PR00380">
    <property type="entry name" value="KINESINHEAVY"/>
</dbReference>
<dbReference type="SMART" id="SM00129">
    <property type="entry name" value="KISc"/>
    <property type="match status" value="1"/>
</dbReference>
<dbReference type="SUPFAM" id="SSF52540">
    <property type="entry name" value="P-loop containing nucleoside triphosphate hydrolases"/>
    <property type="match status" value="1"/>
</dbReference>
<dbReference type="PROSITE" id="PS00411">
    <property type="entry name" value="KINESIN_MOTOR_1"/>
    <property type="match status" value="1"/>
</dbReference>
<dbReference type="PROSITE" id="PS50067">
    <property type="entry name" value="KINESIN_MOTOR_2"/>
    <property type="match status" value="1"/>
</dbReference>
<evidence type="ECO:0000250" key="1">
    <source>
        <dbReference type="UniProtKB" id="F4IIS5"/>
    </source>
</evidence>
<evidence type="ECO:0000250" key="2">
    <source>
        <dbReference type="UniProtKB" id="O23826"/>
    </source>
</evidence>
<evidence type="ECO:0000255" key="3"/>
<evidence type="ECO:0000255" key="4">
    <source>
        <dbReference type="PROSITE-ProRule" id="PRU00283"/>
    </source>
</evidence>
<evidence type="ECO:0000256" key="5">
    <source>
        <dbReference type="SAM" id="MobiDB-lite"/>
    </source>
</evidence>
<evidence type="ECO:0000303" key="6">
    <source>
    </source>
</evidence>
<evidence type="ECO:0000303" key="7">
    <source>
    </source>
</evidence>
<evidence type="ECO:0000305" key="8"/>
<evidence type="ECO:0000312" key="9">
    <source>
        <dbReference type="Araport" id="AT2G36200"/>
    </source>
</evidence>
<evidence type="ECO:0000312" key="10">
    <source>
        <dbReference type="EMBL" id="AAD21445.1"/>
    </source>
</evidence>
<organism>
    <name type="scientific">Arabidopsis thaliana</name>
    <name type="common">Mouse-ear cress</name>
    <dbReference type="NCBI Taxonomy" id="3702"/>
    <lineage>
        <taxon>Eukaryota</taxon>
        <taxon>Viridiplantae</taxon>
        <taxon>Streptophyta</taxon>
        <taxon>Embryophyta</taxon>
        <taxon>Tracheophyta</taxon>
        <taxon>Spermatophyta</taxon>
        <taxon>Magnoliopsida</taxon>
        <taxon>eudicotyledons</taxon>
        <taxon>Gunneridae</taxon>
        <taxon>Pentapetalae</taxon>
        <taxon>rosids</taxon>
        <taxon>malvids</taxon>
        <taxon>Brassicales</taxon>
        <taxon>Brassicaceae</taxon>
        <taxon>Camelineae</taxon>
        <taxon>Arabidopsis</taxon>
    </lineage>
</organism>
<reference key="1">
    <citation type="journal article" date="1999" name="Nature">
        <title>Sequence and analysis of chromosome 2 of the plant Arabidopsis thaliana.</title>
        <authorList>
            <person name="Lin X."/>
            <person name="Kaul S."/>
            <person name="Rounsley S.D."/>
            <person name="Shea T.P."/>
            <person name="Benito M.-I."/>
            <person name="Town C.D."/>
            <person name="Fujii C.Y."/>
            <person name="Mason T.M."/>
            <person name="Bowman C.L."/>
            <person name="Barnstead M.E."/>
            <person name="Feldblyum T.V."/>
            <person name="Buell C.R."/>
            <person name="Ketchum K.A."/>
            <person name="Lee J.J."/>
            <person name="Ronning C.M."/>
            <person name="Koo H.L."/>
            <person name="Moffat K.S."/>
            <person name="Cronin L.A."/>
            <person name="Shen M."/>
            <person name="Pai G."/>
            <person name="Van Aken S."/>
            <person name="Umayam L."/>
            <person name="Tallon L.J."/>
            <person name="Gill J.E."/>
            <person name="Adams M.D."/>
            <person name="Carrera A.J."/>
            <person name="Creasy T.H."/>
            <person name="Goodman H.M."/>
            <person name="Somerville C.R."/>
            <person name="Copenhaver G.P."/>
            <person name="Preuss D."/>
            <person name="Nierman W.C."/>
            <person name="White O."/>
            <person name="Eisen J.A."/>
            <person name="Salzberg S.L."/>
            <person name="Fraser C.M."/>
            <person name="Venter J.C."/>
        </authorList>
    </citation>
    <scope>NUCLEOTIDE SEQUENCE [LARGE SCALE GENOMIC DNA]</scope>
    <source>
        <strain>cv. Columbia</strain>
    </source>
</reference>
<reference key="2">
    <citation type="journal article" date="2017" name="Plant J.">
        <title>Araport11: a complete reannotation of the Arabidopsis thaliana reference genome.</title>
        <authorList>
            <person name="Cheng C.Y."/>
            <person name="Krishnakumar V."/>
            <person name="Chan A.P."/>
            <person name="Thibaud-Nissen F."/>
            <person name="Schobel S."/>
            <person name="Town C.D."/>
        </authorList>
    </citation>
    <scope>GENOME REANNOTATION</scope>
    <source>
        <strain>cv. Columbia</strain>
    </source>
</reference>
<reference key="3">
    <citation type="journal article" date="2004" name="Genome Res.">
        <title>Whole genome sequence comparisons and 'full-length' cDNA sequences: a combined approach to evaluate and improve Arabidopsis genome annotation.</title>
        <authorList>
            <person name="Castelli V."/>
            <person name="Aury J.-M."/>
            <person name="Jaillon O."/>
            <person name="Wincker P."/>
            <person name="Clepet C."/>
            <person name="Menard M."/>
            <person name="Cruaud C."/>
            <person name="Quetier F."/>
            <person name="Scarpelli C."/>
            <person name="Schaechter V."/>
            <person name="Temple G."/>
            <person name="Caboche M."/>
            <person name="Weissenbach J."/>
            <person name="Salanoubat M."/>
        </authorList>
    </citation>
    <scope>NUCLEOTIDE SEQUENCE [LARGE SCALE MRNA] OF 969-1009</scope>
    <source>
        <strain>cv. Columbia</strain>
    </source>
</reference>
<reference key="4">
    <citation type="journal article" date="2001" name="BMC Genomics">
        <title>Kinesins in the Arabidopsis genome: a comparative analysis among eukaryotes.</title>
        <authorList>
            <person name="Reddy A.S."/>
            <person name="Day I.S."/>
        </authorList>
    </citation>
    <scope>GENE FAMILY</scope>
</reference>
<reference key="5">
    <citation type="journal article" date="2006" name="BMC Genomics">
        <title>Comprehensive comparative analysis of kinesins in photosynthetic eukaryotes.</title>
        <authorList>
            <person name="Richardson D.N."/>
            <person name="Simmons M.P."/>
            <person name="Reddy A.S."/>
        </authorList>
    </citation>
    <scope>GENE FAMILY</scope>
    <scope>NOMENCLATURE</scope>
</reference>
<reference key="6">
    <citation type="journal article" date="2006" name="Trends Plant Sci.">
        <title>Mitosis-specific kinesins in Arabidopsis.</title>
        <authorList>
            <person name="Vanstraelen M."/>
            <person name="Inze D."/>
            <person name="Geelen D."/>
        </authorList>
    </citation>
    <scope>REVIEW</scope>
</reference>
<reference key="7">
    <citation type="journal article" date="2012" name="Protoplasma">
        <title>Functions of the Arabidopsis kinesin superfamily of microtubule-based motor proteins.</title>
        <authorList>
            <person name="Zhu C."/>
            <person name="Dixit R."/>
        </authorList>
    </citation>
    <scope>REVIEW</scope>
</reference>
<sequence length="1009" mass="113683">MSSRHDKEKGVNVQVLLRCRPFSDDELRSNAPQVLTCNDLQREVAVSQNIAGKHIDRVFTFDKVFGPSAQQKDLYDQAVVPIVNEVLEGFNCTIFAYGQTGTGKTYTMEGECRRSKSAPCGGLPAEAGVIPRAVKQIFDTLEGQQAEYSVKVTFLELYNEEITDLLAPEDLSRVAAEEKQKKPLPLMEDGKGGVLVRGLEEEIVTSANEIFTLLERGSSKRRTAETFLNKQSSRSHSLFSITIHIKEATPEGEELIKCGKLNLVDLAGSENISRSGARDGRAREAGEINKSLLTLGRVISALVEHLGHVPYRDSKLTRLLRDSLGGRTKTCIIATVSPAVHCLEETLSTLDYAHRAKNIRNKPEVNQKMMKSTLIKDLYGEIERLKAEVYASREKNGVYMPKERYYQEESERKVMAEQIEQMGGQIENYQKQLEELQDKYVGQVRECSDLTTKLDITEKNLSQTCKVLASTNEELKKSQYAMKEKDFIISEQKKSENVLVQQACILQSNLEKATKDNSSLHQKIGREDKLSADNRKVVDNYQVELSEQISNLFNRVASCLSQQNVHLQGVNKLSQSRLEAHNKAILEMKKKVKASRDLYSSHLEAVQNVVRLHKANANACLEEVSALTTSSACSIDEFLASGDETTSSLFDELQSALSSHQGEMALFARELRQRFHTTMEQTQEMSEYTSTFFQKLMEESKNAETRAAEANDSQINSIIDFQKTYEAQSKSDTDKLIADLTNLVSSHIRRQHELVDSRLHNFKDAVSSNKTFLDEHVSAVNNLTKDAKRKWETFSMQAENEAREGADFSAAKHCRMELLLQQSVGHAESAFKHCKITHESLKEMTSKQVTDVSSLVRSACDSNEQHDAEVDSARTAAEKDVTKNSDDIIQQIERMSEDEKASVSKILENVRSHEKTLESFQQDQCCQARCIEDKAQETFQQQYMEYEPTGATPTKNEPEIPTKATIESLRAMPIETLVEEFRENNSYESFATKETKPQQLTRSPLSQVN</sequence>
<gene>
    <name evidence="8" type="primary">KIN5C</name>
    <name evidence="9" type="ordered locus">At2g36200</name>
    <name evidence="10" type="ORF">F2H17.19</name>
</gene>
<feature type="chain" id="PRO_0000125376" description="Kinesin-like protein KIN-5C">
    <location>
        <begin position="1"/>
        <end position="1009"/>
    </location>
</feature>
<feature type="domain" description="Kinesin motor" evidence="4">
    <location>
        <begin position="12"/>
        <end position="359"/>
    </location>
</feature>
<feature type="region of interest" description="Disordered" evidence="5">
    <location>
        <begin position="862"/>
        <end position="882"/>
    </location>
</feature>
<feature type="region of interest" description="Disordered" evidence="5">
    <location>
        <begin position="987"/>
        <end position="1009"/>
    </location>
</feature>
<feature type="coiled-coil region" evidence="3">
    <location>
        <begin position="406"/>
        <end position="526"/>
    </location>
</feature>
<feature type="compositionally biased region" description="Basic and acidic residues" evidence="5">
    <location>
        <begin position="863"/>
        <end position="882"/>
    </location>
</feature>
<feature type="compositionally biased region" description="Basic and acidic residues" evidence="5">
    <location>
        <begin position="987"/>
        <end position="996"/>
    </location>
</feature>
<feature type="compositionally biased region" description="Polar residues" evidence="5">
    <location>
        <begin position="997"/>
        <end position="1009"/>
    </location>
</feature>
<feature type="binding site" evidence="4">
    <location>
        <begin position="98"/>
        <end position="105"/>
    </location>
    <ligand>
        <name>ATP</name>
        <dbReference type="ChEBI" id="CHEBI:30616"/>
    </ligand>
</feature>
<comment type="function">
    <text evidence="1 2">Responsible for microtubule translocation. May be important for the organization of phragmoplast-specific arrays of microtubules (By similarity). Plays an essential role in stabilizing the mitotic spindle. Required during mitotic cytokinesis (By similarity).</text>
</comment>
<comment type="subcellular location">
    <subcellularLocation>
        <location evidence="1">Cytoplasm</location>
        <location evidence="1">Cytoskeleton</location>
    </subcellularLocation>
    <subcellularLocation>
        <location evidence="1">Cytoplasm</location>
        <location evidence="1">Cytoskeleton</location>
        <location evidence="1">Spindle</location>
    </subcellularLocation>
    <text evidence="1">Microtubule-associated.</text>
</comment>
<comment type="alternative products">
    <event type="alternative splicing"/>
    <isoform>
        <id>P82266-1</id>
        <name>1</name>
        <sequence type="displayed"/>
    </isoform>
    <text>A number of isoforms are produced. According to EST sequences.</text>
</comment>
<comment type="similarity">
    <text evidence="7">Belongs to the TRAFAC class myosin-kinesin ATPase superfamily. Kinesin family. KIN-5/BimC subfamily.</text>
</comment>
<comment type="sequence caution" evidence="8">
    <conflict type="erroneous gene model prediction">
        <sequence resource="EMBL-CDS" id="AAD21445"/>
    </conflict>
</comment>
<comment type="sequence caution" evidence="8">
    <conflict type="miscellaneous discrepancy">
        <sequence resource="EMBL" id="BX819626"/>
    </conflict>
    <text>Sequencing errors.</text>
</comment>
<keyword id="KW-0025">Alternative splicing</keyword>
<keyword id="KW-0067">ATP-binding</keyword>
<keyword id="KW-0175">Coiled coil</keyword>
<keyword id="KW-0963">Cytoplasm</keyword>
<keyword id="KW-0206">Cytoskeleton</keyword>
<keyword id="KW-0493">Microtubule</keyword>
<keyword id="KW-0505">Motor protein</keyword>
<keyword id="KW-0547">Nucleotide-binding</keyword>
<keyword id="KW-1185">Reference proteome</keyword>
<name>KN5C_ARATH</name>
<protein>
    <recommendedName>
        <fullName evidence="8">Kinesin-like protein KIN-5C</fullName>
    </recommendedName>
    <alternativeName>
        <fullName evidence="6">AtKRP125b</fullName>
    </alternativeName>
</protein>